<gene>
    <name evidence="1" type="primary">rex</name>
    <name type="ordered locus">SUB0845</name>
</gene>
<feature type="chain" id="PRO_1000164089" description="Redox-sensing transcriptional repressor Rex">
    <location>
        <begin position="1"/>
        <end position="213"/>
    </location>
</feature>
<feature type="DNA-binding region" description="H-T-H motif" evidence="1">
    <location>
        <begin position="17"/>
        <end position="56"/>
    </location>
</feature>
<feature type="binding site" evidence="1">
    <location>
        <begin position="91"/>
        <end position="96"/>
    </location>
    <ligand>
        <name>NAD(+)</name>
        <dbReference type="ChEBI" id="CHEBI:57540"/>
    </ligand>
</feature>
<keyword id="KW-0963">Cytoplasm</keyword>
<keyword id="KW-0238">DNA-binding</keyword>
<keyword id="KW-0520">NAD</keyword>
<keyword id="KW-1185">Reference proteome</keyword>
<keyword id="KW-0678">Repressor</keyword>
<keyword id="KW-0804">Transcription</keyword>
<keyword id="KW-0805">Transcription regulation</keyword>
<comment type="function">
    <text evidence="1">Modulates transcription in response to changes in cellular NADH/NAD(+) redox state.</text>
</comment>
<comment type="subunit">
    <text evidence="1">Homodimer.</text>
</comment>
<comment type="subcellular location">
    <subcellularLocation>
        <location evidence="1">Cytoplasm</location>
    </subcellularLocation>
</comment>
<comment type="similarity">
    <text evidence="1">Belongs to the transcriptional regulatory Rex family.</text>
</comment>
<name>REX_STRU0</name>
<organism>
    <name type="scientific">Streptococcus uberis (strain ATCC BAA-854 / 0140J)</name>
    <dbReference type="NCBI Taxonomy" id="218495"/>
    <lineage>
        <taxon>Bacteria</taxon>
        <taxon>Bacillati</taxon>
        <taxon>Bacillota</taxon>
        <taxon>Bacilli</taxon>
        <taxon>Lactobacillales</taxon>
        <taxon>Streptococcaceae</taxon>
        <taxon>Streptococcus</taxon>
    </lineage>
</organism>
<protein>
    <recommendedName>
        <fullName evidence="1">Redox-sensing transcriptional repressor Rex</fullName>
    </recommendedName>
</protein>
<reference key="1">
    <citation type="journal article" date="2009" name="BMC Genomics">
        <title>Evidence for niche adaptation in the genome of the bovine pathogen Streptococcus uberis.</title>
        <authorList>
            <person name="Ward P.N."/>
            <person name="Holden M.T.G."/>
            <person name="Leigh J.A."/>
            <person name="Lennard N."/>
            <person name="Bignell A."/>
            <person name="Barron A."/>
            <person name="Clark L."/>
            <person name="Quail M.A."/>
            <person name="Woodward J."/>
            <person name="Barrell B.G."/>
            <person name="Egan S.A."/>
            <person name="Field T.R."/>
            <person name="Maskell D."/>
            <person name="Kehoe M."/>
            <person name="Dowson C.G."/>
            <person name="Chanter N."/>
            <person name="Whatmore A.M."/>
            <person name="Bentley S.D."/>
            <person name="Parkhill J."/>
        </authorList>
    </citation>
    <scope>NUCLEOTIDE SEQUENCE [LARGE SCALE GENOMIC DNA]</scope>
    <source>
        <strain>ATCC BAA-854 / 0140J</strain>
    </source>
</reference>
<accession>B9DS21</accession>
<proteinExistence type="inferred from homology"/>
<dbReference type="EMBL" id="AM946015">
    <property type="protein sequence ID" value="CAR41886.1"/>
    <property type="molecule type" value="Genomic_DNA"/>
</dbReference>
<dbReference type="RefSeq" id="WP_012658349.1">
    <property type="nucleotide sequence ID" value="NC_012004.1"/>
</dbReference>
<dbReference type="SMR" id="B9DS21"/>
<dbReference type="STRING" id="218495.SUB0845"/>
<dbReference type="KEGG" id="sub:SUB0845"/>
<dbReference type="eggNOG" id="COG2344">
    <property type="taxonomic scope" value="Bacteria"/>
</dbReference>
<dbReference type="HOGENOM" id="CLU_061534_1_1_9"/>
<dbReference type="OrthoDB" id="9784760at2"/>
<dbReference type="Proteomes" id="UP000000449">
    <property type="component" value="Chromosome"/>
</dbReference>
<dbReference type="GO" id="GO:0005737">
    <property type="term" value="C:cytoplasm"/>
    <property type="evidence" value="ECO:0007669"/>
    <property type="project" value="UniProtKB-SubCell"/>
</dbReference>
<dbReference type="GO" id="GO:0003677">
    <property type="term" value="F:DNA binding"/>
    <property type="evidence" value="ECO:0007669"/>
    <property type="project" value="UniProtKB-UniRule"/>
</dbReference>
<dbReference type="GO" id="GO:0003700">
    <property type="term" value="F:DNA-binding transcription factor activity"/>
    <property type="evidence" value="ECO:0007669"/>
    <property type="project" value="UniProtKB-UniRule"/>
</dbReference>
<dbReference type="GO" id="GO:0045892">
    <property type="term" value="P:negative regulation of DNA-templated transcription"/>
    <property type="evidence" value="ECO:0007669"/>
    <property type="project" value="InterPro"/>
</dbReference>
<dbReference type="GO" id="GO:0051775">
    <property type="term" value="P:response to redox state"/>
    <property type="evidence" value="ECO:0007669"/>
    <property type="project" value="InterPro"/>
</dbReference>
<dbReference type="Gene3D" id="3.40.50.720">
    <property type="entry name" value="NAD(P)-binding Rossmann-like Domain"/>
    <property type="match status" value="1"/>
</dbReference>
<dbReference type="Gene3D" id="1.10.10.10">
    <property type="entry name" value="Winged helix-like DNA-binding domain superfamily/Winged helix DNA-binding domain"/>
    <property type="match status" value="1"/>
</dbReference>
<dbReference type="HAMAP" id="MF_01131">
    <property type="entry name" value="Rex"/>
    <property type="match status" value="1"/>
</dbReference>
<dbReference type="InterPro" id="IPR003781">
    <property type="entry name" value="CoA-bd"/>
</dbReference>
<dbReference type="InterPro" id="IPR036291">
    <property type="entry name" value="NAD(P)-bd_dom_sf"/>
</dbReference>
<dbReference type="InterPro" id="IPR009718">
    <property type="entry name" value="Rex_DNA-bd_C_dom"/>
</dbReference>
<dbReference type="InterPro" id="IPR022876">
    <property type="entry name" value="Tscrpt_rep_Rex"/>
</dbReference>
<dbReference type="InterPro" id="IPR036388">
    <property type="entry name" value="WH-like_DNA-bd_sf"/>
</dbReference>
<dbReference type="InterPro" id="IPR036390">
    <property type="entry name" value="WH_DNA-bd_sf"/>
</dbReference>
<dbReference type="NCBIfam" id="NF003988">
    <property type="entry name" value="PRK05472.1-1"/>
    <property type="match status" value="1"/>
</dbReference>
<dbReference type="NCBIfam" id="NF003989">
    <property type="entry name" value="PRK05472.1-3"/>
    <property type="match status" value="1"/>
</dbReference>
<dbReference type="NCBIfam" id="NF003991">
    <property type="entry name" value="PRK05472.1-5"/>
    <property type="match status" value="1"/>
</dbReference>
<dbReference type="NCBIfam" id="NF003994">
    <property type="entry name" value="PRK05472.2-3"/>
    <property type="match status" value="1"/>
</dbReference>
<dbReference type="NCBIfam" id="NF003995">
    <property type="entry name" value="PRK05472.2-4"/>
    <property type="match status" value="1"/>
</dbReference>
<dbReference type="NCBIfam" id="NF003996">
    <property type="entry name" value="PRK05472.2-5"/>
    <property type="match status" value="1"/>
</dbReference>
<dbReference type="PANTHER" id="PTHR35786">
    <property type="entry name" value="REDOX-SENSING TRANSCRIPTIONAL REPRESSOR REX"/>
    <property type="match status" value="1"/>
</dbReference>
<dbReference type="PANTHER" id="PTHR35786:SF1">
    <property type="entry name" value="REDOX-SENSING TRANSCRIPTIONAL REPRESSOR REX 1"/>
    <property type="match status" value="1"/>
</dbReference>
<dbReference type="Pfam" id="PF02629">
    <property type="entry name" value="CoA_binding"/>
    <property type="match status" value="1"/>
</dbReference>
<dbReference type="Pfam" id="PF06971">
    <property type="entry name" value="Put_DNA-bind_N"/>
    <property type="match status" value="1"/>
</dbReference>
<dbReference type="SMART" id="SM00881">
    <property type="entry name" value="CoA_binding"/>
    <property type="match status" value="1"/>
</dbReference>
<dbReference type="SUPFAM" id="SSF51735">
    <property type="entry name" value="NAD(P)-binding Rossmann-fold domains"/>
    <property type="match status" value="1"/>
</dbReference>
<dbReference type="SUPFAM" id="SSF46785">
    <property type="entry name" value="Winged helix' DNA-binding domain"/>
    <property type="match status" value="1"/>
</dbReference>
<evidence type="ECO:0000255" key="1">
    <source>
        <dbReference type="HAMAP-Rule" id="MF_01131"/>
    </source>
</evidence>
<sequence>MAIDKSIPKATAKRLSLYYRIFKRFYADQVEKASSKQIADAMGIDSATVRRDFSYFGELGRRGFGYDVTKLMNFFADLLNDHSTTNVLLVGCGNIGRALLHYRFHDRNKMQISMGFDVDDHPMVGTKTADGIPIYGISTINDHVKKADIETAILTVPSTHAQEVADQLIEAGIRGILSFSPVHLQVPKGIIVQYVDLTSELQTLLYFMNQSQD</sequence>